<name>MURD_PARMW</name>
<accession>Q7U8T1</accession>
<reference key="1">
    <citation type="journal article" date="2003" name="Nature">
        <title>The genome of a motile marine Synechococcus.</title>
        <authorList>
            <person name="Palenik B."/>
            <person name="Brahamsha B."/>
            <person name="Larimer F.W."/>
            <person name="Land M.L."/>
            <person name="Hauser L."/>
            <person name="Chain P."/>
            <person name="Lamerdin J.E."/>
            <person name="Regala W."/>
            <person name="Allen E.E."/>
            <person name="McCarren J."/>
            <person name="Paulsen I.T."/>
            <person name="Dufresne A."/>
            <person name="Partensky F."/>
            <person name="Webb E.A."/>
            <person name="Waterbury J."/>
        </authorList>
    </citation>
    <scope>NUCLEOTIDE SEQUENCE [LARGE SCALE GENOMIC DNA]</scope>
    <source>
        <strain>WH8102</strain>
    </source>
</reference>
<dbReference type="EC" id="6.3.2.9" evidence="1"/>
<dbReference type="EMBL" id="BX569690">
    <property type="protein sequence ID" value="CAE07045.1"/>
    <property type="molecule type" value="Genomic_DNA"/>
</dbReference>
<dbReference type="RefSeq" id="WP_011127400.1">
    <property type="nucleotide sequence ID" value="NC_005070.1"/>
</dbReference>
<dbReference type="SMR" id="Q7U8T1"/>
<dbReference type="STRING" id="84588.SYNW0530"/>
<dbReference type="KEGG" id="syw:SYNW0530"/>
<dbReference type="eggNOG" id="COG0771">
    <property type="taxonomic scope" value="Bacteria"/>
</dbReference>
<dbReference type="HOGENOM" id="CLU_032540_0_0_3"/>
<dbReference type="UniPathway" id="UPA00219"/>
<dbReference type="Proteomes" id="UP000001422">
    <property type="component" value="Chromosome"/>
</dbReference>
<dbReference type="GO" id="GO:0005737">
    <property type="term" value="C:cytoplasm"/>
    <property type="evidence" value="ECO:0007669"/>
    <property type="project" value="UniProtKB-SubCell"/>
</dbReference>
<dbReference type="GO" id="GO:0005524">
    <property type="term" value="F:ATP binding"/>
    <property type="evidence" value="ECO:0007669"/>
    <property type="project" value="UniProtKB-UniRule"/>
</dbReference>
<dbReference type="GO" id="GO:0008764">
    <property type="term" value="F:UDP-N-acetylmuramoylalanine-D-glutamate ligase activity"/>
    <property type="evidence" value="ECO:0007669"/>
    <property type="project" value="UniProtKB-UniRule"/>
</dbReference>
<dbReference type="GO" id="GO:0051301">
    <property type="term" value="P:cell division"/>
    <property type="evidence" value="ECO:0007669"/>
    <property type="project" value="UniProtKB-KW"/>
</dbReference>
<dbReference type="GO" id="GO:0071555">
    <property type="term" value="P:cell wall organization"/>
    <property type="evidence" value="ECO:0007669"/>
    <property type="project" value="UniProtKB-KW"/>
</dbReference>
<dbReference type="GO" id="GO:0009252">
    <property type="term" value="P:peptidoglycan biosynthetic process"/>
    <property type="evidence" value="ECO:0007669"/>
    <property type="project" value="UniProtKB-UniRule"/>
</dbReference>
<dbReference type="GO" id="GO:0008360">
    <property type="term" value="P:regulation of cell shape"/>
    <property type="evidence" value="ECO:0007669"/>
    <property type="project" value="UniProtKB-KW"/>
</dbReference>
<dbReference type="Gene3D" id="3.90.190.20">
    <property type="entry name" value="Mur ligase, C-terminal domain"/>
    <property type="match status" value="1"/>
</dbReference>
<dbReference type="Gene3D" id="3.40.1190.10">
    <property type="entry name" value="Mur-like, catalytic domain"/>
    <property type="match status" value="1"/>
</dbReference>
<dbReference type="Gene3D" id="3.40.50.720">
    <property type="entry name" value="NAD(P)-binding Rossmann-like Domain"/>
    <property type="match status" value="1"/>
</dbReference>
<dbReference type="HAMAP" id="MF_00639">
    <property type="entry name" value="MurD"/>
    <property type="match status" value="1"/>
</dbReference>
<dbReference type="InterPro" id="IPR036565">
    <property type="entry name" value="Mur-like_cat_sf"/>
</dbReference>
<dbReference type="InterPro" id="IPR036615">
    <property type="entry name" value="Mur_ligase_C_dom_sf"/>
</dbReference>
<dbReference type="InterPro" id="IPR013221">
    <property type="entry name" value="Mur_ligase_cen"/>
</dbReference>
<dbReference type="InterPro" id="IPR005762">
    <property type="entry name" value="MurD"/>
</dbReference>
<dbReference type="NCBIfam" id="TIGR01087">
    <property type="entry name" value="murD"/>
    <property type="match status" value="1"/>
</dbReference>
<dbReference type="PANTHER" id="PTHR43692">
    <property type="entry name" value="UDP-N-ACETYLMURAMOYLALANINE--D-GLUTAMATE LIGASE"/>
    <property type="match status" value="1"/>
</dbReference>
<dbReference type="PANTHER" id="PTHR43692:SF1">
    <property type="entry name" value="UDP-N-ACETYLMURAMOYLALANINE--D-GLUTAMATE LIGASE"/>
    <property type="match status" value="1"/>
</dbReference>
<dbReference type="Pfam" id="PF08245">
    <property type="entry name" value="Mur_ligase_M"/>
    <property type="match status" value="1"/>
</dbReference>
<dbReference type="Pfam" id="PF21799">
    <property type="entry name" value="MurD-like_N"/>
    <property type="match status" value="1"/>
</dbReference>
<dbReference type="SUPFAM" id="SSF51984">
    <property type="entry name" value="MurCD N-terminal domain"/>
    <property type="match status" value="1"/>
</dbReference>
<dbReference type="SUPFAM" id="SSF53623">
    <property type="entry name" value="MurD-like peptide ligases, catalytic domain"/>
    <property type="match status" value="1"/>
</dbReference>
<dbReference type="SUPFAM" id="SSF53244">
    <property type="entry name" value="MurD-like peptide ligases, peptide-binding domain"/>
    <property type="match status" value="1"/>
</dbReference>
<organism>
    <name type="scientific">Parasynechococcus marenigrum (strain WH8102)</name>
    <dbReference type="NCBI Taxonomy" id="84588"/>
    <lineage>
        <taxon>Bacteria</taxon>
        <taxon>Bacillati</taxon>
        <taxon>Cyanobacteriota</taxon>
        <taxon>Cyanophyceae</taxon>
        <taxon>Synechococcales</taxon>
        <taxon>Prochlorococcaceae</taxon>
        <taxon>Parasynechococcus</taxon>
        <taxon>Parasynechococcus marenigrum</taxon>
    </lineage>
</organism>
<feature type="chain" id="PRO_0000109110" description="UDP-N-acetylmuramoylalanine--D-glutamate ligase">
    <location>
        <begin position="1"/>
        <end position="462"/>
    </location>
</feature>
<feature type="binding site" evidence="1">
    <location>
        <begin position="117"/>
        <end position="123"/>
    </location>
    <ligand>
        <name>ATP</name>
        <dbReference type="ChEBI" id="CHEBI:30616"/>
    </ligand>
</feature>
<keyword id="KW-0067">ATP-binding</keyword>
<keyword id="KW-0131">Cell cycle</keyword>
<keyword id="KW-0132">Cell division</keyword>
<keyword id="KW-0133">Cell shape</keyword>
<keyword id="KW-0961">Cell wall biogenesis/degradation</keyword>
<keyword id="KW-0963">Cytoplasm</keyword>
<keyword id="KW-0436">Ligase</keyword>
<keyword id="KW-0547">Nucleotide-binding</keyword>
<keyword id="KW-0573">Peptidoglycan synthesis</keyword>
<evidence type="ECO:0000255" key="1">
    <source>
        <dbReference type="HAMAP-Rule" id="MF_00639"/>
    </source>
</evidence>
<comment type="function">
    <text evidence="1">Cell wall formation. Catalyzes the addition of glutamate to the nucleotide precursor UDP-N-acetylmuramoyl-L-alanine (UMA).</text>
</comment>
<comment type="catalytic activity">
    <reaction evidence="1">
        <text>UDP-N-acetyl-alpha-D-muramoyl-L-alanine + D-glutamate + ATP = UDP-N-acetyl-alpha-D-muramoyl-L-alanyl-D-glutamate + ADP + phosphate + H(+)</text>
        <dbReference type="Rhea" id="RHEA:16429"/>
        <dbReference type="ChEBI" id="CHEBI:15378"/>
        <dbReference type="ChEBI" id="CHEBI:29986"/>
        <dbReference type="ChEBI" id="CHEBI:30616"/>
        <dbReference type="ChEBI" id="CHEBI:43474"/>
        <dbReference type="ChEBI" id="CHEBI:83898"/>
        <dbReference type="ChEBI" id="CHEBI:83900"/>
        <dbReference type="ChEBI" id="CHEBI:456216"/>
        <dbReference type="EC" id="6.3.2.9"/>
    </reaction>
</comment>
<comment type="pathway">
    <text evidence="1">Cell wall biogenesis; peptidoglycan biosynthesis.</text>
</comment>
<comment type="subcellular location">
    <subcellularLocation>
        <location evidence="1">Cytoplasm</location>
    </subcellularLocation>
</comment>
<comment type="similarity">
    <text evidence="1">Belongs to the MurCDEF family.</text>
</comment>
<proteinExistence type="inferred from homology"/>
<sequence>MAQTVVVGLGRSGQGAARLLQATGHPVSVIDSGQGEQLEKKAEGLRQQGVEVQLQAPLAIDSFRPWLDQLQRVVISPGVPWDHPTLDDLRQRGVAVDGEMAVAWDALKHIPWVGITGTNGKTTVTHLLSHVLCQAGLAAPMGGNMGVSAAEMALNLQQEHTTAPDWLVMELSSYQIEAAKRIRPRIGIWTTLTPDHLERHGTVEAYRAIKRGLLERSDHAIFNADDPDLRQQRQSWTGGTWVSAESAQPDGHPADLWINGKGWVCDRSQPLFPAEALAMPGAHNRQNLLLVTAAARQIGLSPASIVAGLRSFPGVPHRLEPVGRIGNAQVFNDSKATNYDAAAVGLKAMQGPVVVLAGGSTKQGDATGWLEELNRKACAVVLFGAGTEELHGLITGANFTGELTRRTDLTSAVEEAVRSAEALGATSLLLSPACASFDQYRDFEARGDHFKQLIHQVQSGLN</sequence>
<protein>
    <recommendedName>
        <fullName evidence="1">UDP-N-acetylmuramoylalanine--D-glutamate ligase</fullName>
        <ecNumber evidence="1">6.3.2.9</ecNumber>
    </recommendedName>
    <alternativeName>
        <fullName evidence="1">D-glutamic acid-adding enzyme</fullName>
    </alternativeName>
    <alternativeName>
        <fullName evidence="1">UDP-N-acetylmuramoyl-L-alanyl-D-glutamate synthetase</fullName>
    </alternativeName>
</protein>
<gene>
    <name evidence="1" type="primary">murD</name>
    <name type="ordered locus">SYNW0530</name>
</gene>